<dbReference type="EC" id="2.7.1.6" evidence="1"/>
<dbReference type="EMBL" id="BA000016">
    <property type="protein sequence ID" value="BAB81051.1"/>
    <property type="molecule type" value="Genomic_DNA"/>
</dbReference>
<dbReference type="RefSeq" id="WP_011010401.1">
    <property type="nucleotide sequence ID" value="NC_003366.1"/>
</dbReference>
<dbReference type="SMR" id="Q8XKP9"/>
<dbReference type="STRING" id="195102.gene:10490608"/>
<dbReference type="KEGG" id="cpe:CPE1345"/>
<dbReference type="HOGENOM" id="CLU_017814_2_1_9"/>
<dbReference type="UniPathway" id="UPA00214"/>
<dbReference type="Proteomes" id="UP000000818">
    <property type="component" value="Chromosome"/>
</dbReference>
<dbReference type="GO" id="GO:0005829">
    <property type="term" value="C:cytosol"/>
    <property type="evidence" value="ECO:0007669"/>
    <property type="project" value="TreeGrafter"/>
</dbReference>
<dbReference type="GO" id="GO:0005524">
    <property type="term" value="F:ATP binding"/>
    <property type="evidence" value="ECO:0007669"/>
    <property type="project" value="UniProtKB-UniRule"/>
</dbReference>
<dbReference type="GO" id="GO:0004335">
    <property type="term" value="F:galactokinase activity"/>
    <property type="evidence" value="ECO:0007669"/>
    <property type="project" value="UniProtKB-UniRule"/>
</dbReference>
<dbReference type="GO" id="GO:0000287">
    <property type="term" value="F:magnesium ion binding"/>
    <property type="evidence" value="ECO:0007669"/>
    <property type="project" value="UniProtKB-UniRule"/>
</dbReference>
<dbReference type="GO" id="GO:0006012">
    <property type="term" value="P:galactose metabolic process"/>
    <property type="evidence" value="ECO:0007669"/>
    <property type="project" value="UniProtKB-UniRule"/>
</dbReference>
<dbReference type="FunFam" id="3.30.230.10:FF:000017">
    <property type="entry name" value="Galactokinase"/>
    <property type="match status" value="1"/>
</dbReference>
<dbReference type="FunFam" id="3.30.70.890:FF:000001">
    <property type="entry name" value="Galactokinase"/>
    <property type="match status" value="1"/>
</dbReference>
<dbReference type="Gene3D" id="3.30.230.10">
    <property type="match status" value="1"/>
</dbReference>
<dbReference type="Gene3D" id="3.30.70.890">
    <property type="entry name" value="GHMP kinase, C-terminal domain"/>
    <property type="match status" value="1"/>
</dbReference>
<dbReference type="HAMAP" id="MF_00246">
    <property type="entry name" value="Galactokinase"/>
    <property type="match status" value="1"/>
</dbReference>
<dbReference type="InterPro" id="IPR000705">
    <property type="entry name" value="Galactokinase"/>
</dbReference>
<dbReference type="InterPro" id="IPR022963">
    <property type="entry name" value="Galactokinase_bac"/>
</dbReference>
<dbReference type="InterPro" id="IPR019741">
    <property type="entry name" value="Galactokinase_CS"/>
</dbReference>
<dbReference type="InterPro" id="IPR019539">
    <property type="entry name" value="GalKase_N"/>
</dbReference>
<dbReference type="InterPro" id="IPR013750">
    <property type="entry name" value="GHMP_kinase_C_dom"/>
</dbReference>
<dbReference type="InterPro" id="IPR036554">
    <property type="entry name" value="GHMP_kinase_C_sf"/>
</dbReference>
<dbReference type="InterPro" id="IPR006204">
    <property type="entry name" value="GHMP_kinase_N_dom"/>
</dbReference>
<dbReference type="InterPro" id="IPR006203">
    <property type="entry name" value="GHMP_knse_ATP-bd_CS"/>
</dbReference>
<dbReference type="InterPro" id="IPR006206">
    <property type="entry name" value="Mevalonate/galactokinase"/>
</dbReference>
<dbReference type="InterPro" id="IPR020568">
    <property type="entry name" value="Ribosomal_Su5_D2-typ_SF"/>
</dbReference>
<dbReference type="InterPro" id="IPR014721">
    <property type="entry name" value="Ribsml_uS5_D2-typ_fold_subgr"/>
</dbReference>
<dbReference type="NCBIfam" id="TIGR00131">
    <property type="entry name" value="gal_kin"/>
    <property type="match status" value="1"/>
</dbReference>
<dbReference type="NCBIfam" id="NF003705">
    <property type="entry name" value="PRK05322.1"/>
    <property type="match status" value="1"/>
</dbReference>
<dbReference type="PANTHER" id="PTHR10457:SF7">
    <property type="entry name" value="GALACTOKINASE-RELATED"/>
    <property type="match status" value="1"/>
</dbReference>
<dbReference type="PANTHER" id="PTHR10457">
    <property type="entry name" value="MEVALONATE KINASE/GALACTOKINASE"/>
    <property type="match status" value="1"/>
</dbReference>
<dbReference type="Pfam" id="PF10509">
    <property type="entry name" value="GalKase_gal_bdg"/>
    <property type="match status" value="1"/>
</dbReference>
<dbReference type="Pfam" id="PF08544">
    <property type="entry name" value="GHMP_kinases_C"/>
    <property type="match status" value="1"/>
</dbReference>
<dbReference type="Pfam" id="PF00288">
    <property type="entry name" value="GHMP_kinases_N"/>
    <property type="match status" value="1"/>
</dbReference>
<dbReference type="PIRSF" id="PIRSF000530">
    <property type="entry name" value="Galactokinase"/>
    <property type="match status" value="1"/>
</dbReference>
<dbReference type="PRINTS" id="PR00473">
    <property type="entry name" value="GALCTOKINASE"/>
</dbReference>
<dbReference type="PRINTS" id="PR00959">
    <property type="entry name" value="MEVGALKINASE"/>
</dbReference>
<dbReference type="SUPFAM" id="SSF55060">
    <property type="entry name" value="GHMP Kinase, C-terminal domain"/>
    <property type="match status" value="1"/>
</dbReference>
<dbReference type="SUPFAM" id="SSF54211">
    <property type="entry name" value="Ribosomal protein S5 domain 2-like"/>
    <property type="match status" value="1"/>
</dbReference>
<dbReference type="PROSITE" id="PS00106">
    <property type="entry name" value="GALACTOKINASE"/>
    <property type="match status" value="1"/>
</dbReference>
<dbReference type="PROSITE" id="PS00627">
    <property type="entry name" value="GHMP_KINASES_ATP"/>
    <property type="match status" value="1"/>
</dbReference>
<name>GAL1_CLOPE</name>
<protein>
    <recommendedName>
        <fullName evidence="1">Galactokinase</fullName>
        <ecNumber evidence="1">2.7.1.6</ecNumber>
    </recommendedName>
    <alternativeName>
        <fullName evidence="1">Galactose kinase</fullName>
    </alternativeName>
</protein>
<sequence>MELNTLKSTFINNFGKEPNSLFFSPGRINLIGEHIDYNGGFVFPCPITLGTFAAASLRDDRICRAYSLNFESLGVIEFSLDDLSYKKEDNWTNYLKGVLKVLIEKGYKIDKGIDLVINGNLPNGAGLSSSASLEMLIVKILDTFFSLNISKVDAALIGKEVENTYIGVNSGIMDQFAISLGEKDKAILLDCNSLYYEYVPLNLGDNSIIIMNTNKRRELADSKYNERRKECDDSLDTLKKYTNISSLCELTSLEFETYKDKIEDSNKLRRCVHAISENERVKDAVKALKENNLELFGQLMNQSHISLRDDYEVTGKELDTLAENAWKQPGVLGARMTGAGFGGCAIAIVNNAHVDEFIKNVGQAYKDAIGYEASFYVASIGNGPTEL</sequence>
<keyword id="KW-0067">ATP-binding</keyword>
<keyword id="KW-0119">Carbohydrate metabolism</keyword>
<keyword id="KW-0963">Cytoplasm</keyword>
<keyword id="KW-0299">Galactose metabolism</keyword>
<keyword id="KW-0418">Kinase</keyword>
<keyword id="KW-0460">Magnesium</keyword>
<keyword id="KW-0479">Metal-binding</keyword>
<keyword id="KW-0547">Nucleotide-binding</keyword>
<keyword id="KW-1185">Reference proteome</keyword>
<keyword id="KW-0808">Transferase</keyword>
<accession>Q8XKP9</accession>
<evidence type="ECO:0000255" key="1">
    <source>
        <dbReference type="HAMAP-Rule" id="MF_00246"/>
    </source>
</evidence>
<comment type="function">
    <text evidence="1">Catalyzes the transfer of the gamma-phosphate of ATP to D-galactose to form alpha-D-galactose-1-phosphate (Gal-1-P).</text>
</comment>
<comment type="catalytic activity">
    <reaction evidence="1">
        <text>alpha-D-galactose + ATP = alpha-D-galactose 1-phosphate + ADP + H(+)</text>
        <dbReference type="Rhea" id="RHEA:13553"/>
        <dbReference type="ChEBI" id="CHEBI:15378"/>
        <dbReference type="ChEBI" id="CHEBI:28061"/>
        <dbReference type="ChEBI" id="CHEBI:30616"/>
        <dbReference type="ChEBI" id="CHEBI:58336"/>
        <dbReference type="ChEBI" id="CHEBI:456216"/>
        <dbReference type="EC" id="2.7.1.6"/>
    </reaction>
</comment>
<comment type="pathway">
    <text evidence="1">Carbohydrate metabolism; galactose metabolism.</text>
</comment>
<comment type="subcellular location">
    <subcellularLocation>
        <location evidence="1">Cytoplasm</location>
    </subcellularLocation>
</comment>
<comment type="similarity">
    <text evidence="1">Belongs to the GHMP kinase family. GalK subfamily.</text>
</comment>
<reference key="1">
    <citation type="journal article" date="2002" name="Proc. Natl. Acad. Sci. U.S.A.">
        <title>Complete genome sequence of Clostridium perfringens, an anaerobic flesh-eater.</title>
        <authorList>
            <person name="Shimizu T."/>
            <person name="Ohtani K."/>
            <person name="Hirakawa H."/>
            <person name="Ohshima K."/>
            <person name="Yamashita A."/>
            <person name="Shiba T."/>
            <person name="Ogasawara N."/>
            <person name="Hattori M."/>
            <person name="Kuhara S."/>
            <person name="Hayashi H."/>
        </authorList>
    </citation>
    <scope>NUCLEOTIDE SEQUENCE [LARGE SCALE GENOMIC DNA]</scope>
    <source>
        <strain>13 / Type A</strain>
    </source>
</reference>
<feature type="chain" id="PRO_0000184605" description="Galactokinase">
    <location>
        <begin position="1"/>
        <end position="387"/>
    </location>
</feature>
<feature type="active site" description="Proton acceptor" evidence="1">
    <location>
        <position position="174"/>
    </location>
</feature>
<feature type="binding site" evidence="1">
    <location>
        <begin position="33"/>
        <end position="36"/>
    </location>
    <ligand>
        <name>substrate</name>
    </ligand>
</feature>
<feature type="binding site" evidence="1">
    <location>
        <position position="67"/>
    </location>
    <ligand>
        <name>ATP</name>
        <dbReference type="ChEBI" id="CHEBI:30616"/>
    </ligand>
</feature>
<feature type="binding site" evidence="1">
    <location>
        <begin position="124"/>
        <end position="130"/>
    </location>
    <ligand>
        <name>ATP</name>
        <dbReference type="ChEBI" id="CHEBI:30616"/>
    </ligand>
</feature>
<feature type="binding site" evidence="1">
    <location>
        <position position="130"/>
    </location>
    <ligand>
        <name>Mg(2+)</name>
        <dbReference type="ChEBI" id="CHEBI:18420"/>
    </ligand>
</feature>
<feature type="binding site" evidence="1">
    <location>
        <position position="162"/>
    </location>
    <ligand>
        <name>Mg(2+)</name>
        <dbReference type="ChEBI" id="CHEBI:18420"/>
    </ligand>
</feature>
<feature type="binding site" evidence="1">
    <location>
        <position position="224"/>
    </location>
    <ligand>
        <name>substrate</name>
    </ligand>
</feature>
<feature type="site" description="Transition state stabilizer" evidence="1">
    <location>
        <position position="27"/>
    </location>
</feature>
<organism>
    <name type="scientific">Clostridium perfringens (strain 13 / Type A)</name>
    <dbReference type="NCBI Taxonomy" id="195102"/>
    <lineage>
        <taxon>Bacteria</taxon>
        <taxon>Bacillati</taxon>
        <taxon>Bacillota</taxon>
        <taxon>Clostridia</taxon>
        <taxon>Eubacteriales</taxon>
        <taxon>Clostridiaceae</taxon>
        <taxon>Clostridium</taxon>
    </lineage>
</organism>
<gene>
    <name evidence="1" type="primary">galK</name>
    <name type="ordered locus">CPE1345</name>
</gene>
<proteinExistence type="inferred from homology"/>